<accession>A0KJB0</accession>
<name>VGRG1_AERHH</name>
<evidence type="ECO:0000269" key="1">
    <source>
    </source>
</evidence>
<evidence type="ECO:0000303" key="2">
    <source>
    </source>
</evidence>
<evidence type="ECO:0000305" key="3"/>
<comment type="function">
    <text evidence="1">Part of the type VI secretion system specialized secretion system, which delivers several virulence factors in both prokaryotic and eukaryotic cells during infection. Acts directly as an secreted effector with an actin ADP-ribosyltransferase activity that disrupts the host actin cytoskeleton, leading to a decrease in host cell viability and an increase in apoptosis.</text>
</comment>
<comment type="catalytic activity">
    <reaction evidence="1">
        <text>L-arginyl-[protein] + NAD(+) = N(omega)-(ADP-D-ribosyl)-L-arginyl-[protein] + nicotinamide + H(+)</text>
        <dbReference type="Rhea" id="RHEA:19149"/>
        <dbReference type="Rhea" id="RHEA-COMP:10532"/>
        <dbReference type="Rhea" id="RHEA-COMP:15087"/>
        <dbReference type="ChEBI" id="CHEBI:15378"/>
        <dbReference type="ChEBI" id="CHEBI:17154"/>
        <dbReference type="ChEBI" id="CHEBI:29965"/>
        <dbReference type="ChEBI" id="CHEBI:57540"/>
        <dbReference type="ChEBI" id="CHEBI:142554"/>
        <dbReference type="EC" id="2.4.2.31"/>
    </reaction>
</comment>
<comment type="subcellular location">
    <subcellularLocation>
        <location evidence="1">Secreted</location>
    </subcellularLocation>
</comment>
<comment type="similarity">
    <text evidence="3">Belongs to the VgrG protein family.</text>
</comment>
<organism>
    <name type="scientific">Aeromonas hydrophila subsp. hydrophila (strain ATCC 7966 / DSM 30187 / BCRC 13018 / CCUG 14551 / JCM 1027 / KCTC 2358 / NCIMB 9240 / NCTC 8049)</name>
    <dbReference type="NCBI Taxonomy" id="380703"/>
    <lineage>
        <taxon>Bacteria</taxon>
        <taxon>Pseudomonadati</taxon>
        <taxon>Pseudomonadota</taxon>
        <taxon>Gammaproteobacteria</taxon>
        <taxon>Aeromonadales</taxon>
        <taxon>Aeromonadaceae</taxon>
        <taxon>Aeromonas</taxon>
    </lineage>
</organism>
<keyword id="KW-0328">Glycosyltransferase</keyword>
<keyword id="KW-0548">Nucleotidyltransferase</keyword>
<keyword id="KW-1185">Reference proteome</keyword>
<keyword id="KW-0964">Secreted</keyword>
<keyword id="KW-0808">Transferase</keyword>
<reference key="1">
    <citation type="journal article" date="2006" name="J. Bacteriol.">
        <title>Genome sequence of Aeromonas hydrophila ATCC 7966T: jack of all trades.</title>
        <authorList>
            <person name="Seshadri R."/>
            <person name="Joseph S.W."/>
            <person name="Chopra A.K."/>
            <person name="Sha J."/>
            <person name="Shaw J."/>
            <person name="Graf J."/>
            <person name="Haft D.H."/>
            <person name="Wu M."/>
            <person name="Ren Q."/>
            <person name="Rosovitz M.J."/>
            <person name="Madupu R."/>
            <person name="Tallon L."/>
            <person name="Kim M."/>
            <person name="Jin S."/>
            <person name="Vuong H."/>
            <person name="Stine O.C."/>
            <person name="Ali A."/>
            <person name="Horneman A.J."/>
            <person name="Heidelberg J.F."/>
        </authorList>
    </citation>
    <scope>NUCLEOTIDE SEQUENCE [LARGE SCALE GENOMIC DNA]</scope>
    <source>
        <strain>ATCC 7966 / DSM 30187 / BCRC 13018 / CCUG 14551 / JCM 1027 / KCTC 2358 / NCIMB 9240 / NCTC 8049</strain>
    </source>
</reference>
<reference key="2">
    <citation type="journal article" date="2010" name="J. Bacteriol.">
        <title>A type VI secretion system effector protein, VgrG1, from Aeromonas hydrophila that induces host cell toxicity by ADP ribosylation of actin.</title>
        <authorList>
            <person name="Suarez G."/>
            <person name="Sierra J.C."/>
            <person name="Erova T.E."/>
            <person name="Sha J."/>
            <person name="Horneman A.J."/>
            <person name="Chopra A.K."/>
        </authorList>
    </citation>
    <scope>FUNCTION</scope>
    <scope>SUBCELLULAR LOCATION</scope>
    <scope>CATALYTIC ACTIVITY</scope>
</reference>
<feature type="chain" id="PRO_0000448969" description="Type VI secretion system spike protein VgrG1">
    <location>
        <begin position="1"/>
        <end position="743"/>
    </location>
</feature>
<gene>
    <name type="primary">vgrG1</name>
    <name type="ordered locus">AHA_1827</name>
</gene>
<dbReference type="EC" id="2.4.2.31" evidence="1"/>
<dbReference type="EMBL" id="CP000462">
    <property type="protein sequence ID" value="ABK39429.1"/>
    <property type="molecule type" value="Genomic_DNA"/>
</dbReference>
<dbReference type="RefSeq" id="WP_011705707.1">
    <property type="nucleotide sequence ID" value="NC_008570.1"/>
</dbReference>
<dbReference type="RefSeq" id="YP_856361.1">
    <property type="nucleotide sequence ID" value="NC_008570.1"/>
</dbReference>
<dbReference type="SMR" id="A0KJB0"/>
<dbReference type="STRING" id="380703.AHA_1827"/>
<dbReference type="EnsemblBacteria" id="ABK39429">
    <property type="protein sequence ID" value="ABK39429"/>
    <property type="gene ID" value="AHA_1827"/>
</dbReference>
<dbReference type="GeneID" id="4488279"/>
<dbReference type="KEGG" id="aha:AHA_1827"/>
<dbReference type="PATRIC" id="fig|380703.7.peg.1842"/>
<dbReference type="eggNOG" id="COG3501">
    <property type="taxonomic scope" value="Bacteria"/>
</dbReference>
<dbReference type="HOGENOM" id="CLU_004121_8_2_6"/>
<dbReference type="OrthoDB" id="9762420at2"/>
<dbReference type="Proteomes" id="UP000000756">
    <property type="component" value="Chromosome"/>
</dbReference>
<dbReference type="GO" id="GO:0005576">
    <property type="term" value="C:extracellular region"/>
    <property type="evidence" value="ECO:0007669"/>
    <property type="project" value="UniProtKB-SubCell"/>
</dbReference>
<dbReference type="GO" id="GO:0106274">
    <property type="term" value="F:NAD+-protein-arginine ADP-ribosyltransferase activity"/>
    <property type="evidence" value="ECO:0007669"/>
    <property type="project" value="UniProtKB-EC"/>
</dbReference>
<dbReference type="GO" id="GO:0016779">
    <property type="term" value="F:nucleotidyltransferase activity"/>
    <property type="evidence" value="ECO:0007669"/>
    <property type="project" value="UniProtKB-KW"/>
</dbReference>
<dbReference type="Gene3D" id="2.30.110.50">
    <property type="match status" value="1"/>
</dbReference>
<dbReference type="Gene3D" id="4.10.220.110">
    <property type="match status" value="1"/>
</dbReference>
<dbReference type="Gene3D" id="3.55.50.10">
    <property type="entry name" value="Baseplate protein-like domains"/>
    <property type="match status" value="1"/>
</dbReference>
<dbReference type="Gene3D" id="2.40.50.230">
    <property type="entry name" value="Gp5 N-terminal domain"/>
    <property type="match status" value="1"/>
</dbReference>
<dbReference type="InterPro" id="IPR006531">
    <property type="entry name" value="Gp5/Vgr_OB"/>
</dbReference>
<dbReference type="InterPro" id="IPR054030">
    <property type="entry name" value="Gp5_Vgr_C"/>
</dbReference>
<dbReference type="InterPro" id="IPR017847">
    <property type="entry name" value="T6SS_RhsGE_Vgr_subset"/>
</dbReference>
<dbReference type="InterPro" id="IPR006533">
    <property type="entry name" value="T6SS_Vgr_RhsGE"/>
</dbReference>
<dbReference type="InterPro" id="IPR050708">
    <property type="entry name" value="T6SS_VgrG/RHS"/>
</dbReference>
<dbReference type="InterPro" id="IPR037026">
    <property type="entry name" value="Vgr_OB-fold_dom_sf"/>
</dbReference>
<dbReference type="NCBIfam" id="TIGR01646">
    <property type="entry name" value="vgr_GE"/>
    <property type="match status" value="1"/>
</dbReference>
<dbReference type="NCBIfam" id="TIGR03361">
    <property type="entry name" value="VI_Rhs_Vgr"/>
    <property type="match status" value="1"/>
</dbReference>
<dbReference type="PANTHER" id="PTHR32305">
    <property type="match status" value="1"/>
</dbReference>
<dbReference type="PANTHER" id="PTHR32305:SF11">
    <property type="entry name" value="TYPE VI SECRETION SYSTEM SPIKE PROTEIN VGRG3"/>
    <property type="match status" value="1"/>
</dbReference>
<dbReference type="Pfam" id="PF22178">
    <property type="entry name" value="Gp5_trimer_C"/>
    <property type="match status" value="1"/>
</dbReference>
<dbReference type="Pfam" id="PF04717">
    <property type="entry name" value="Phage_base_V"/>
    <property type="match status" value="1"/>
</dbReference>
<dbReference type="Pfam" id="PF05954">
    <property type="entry name" value="Phage_GPD"/>
    <property type="match status" value="1"/>
</dbReference>
<dbReference type="SUPFAM" id="SSF69255">
    <property type="entry name" value="gp5 N-terminal domain-like"/>
    <property type="match status" value="1"/>
</dbReference>
<dbReference type="SUPFAM" id="SSF69349">
    <property type="entry name" value="Phage fibre proteins"/>
    <property type="match status" value="1"/>
</dbReference>
<dbReference type="SUPFAM" id="SSF69279">
    <property type="entry name" value="Phage tail proteins"/>
    <property type="match status" value="2"/>
</dbReference>
<proteinExistence type="evidence at protein level"/>
<sequence length="743" mass="82412">MADSTGLQFTVKVGALPESTFVVAEFALDEALNRPFNLRLELASAQPDIDFGAVLDQPCELLVWYNGELQRRVCGVVSDFAQGDSGFRRTRYQLMVQPALWRLSLRQNCRIFQAQKPDEILSILLQEHGITDYAFALKNEHAKREYCVQYRETDLDFVNRLAAEEGMFYFHEFEAGKHRIVFADDAAALTAGPELFFNLGNRSLEQGPYVRQFHYREAVRPSDVELKDYSCKTPAYGLSHKKQGSELEHQRDTYQHFDYPGRYKQDPSGKAFAQHRLDALRNDAVAGQVKSNCAALLPGQTFSLTEHPNGSLNTDWQIVRIRHTGEQPQALEEEGGSGPTVYHNEFGVVKASTTWRARIGSPEAPHKPMVDGPQIAMVVGPDGEEIYCDEHGRVKLQFPWDRYGSSNDQSSCWVRVSQGWAGGQYGMMAIPRIGHEVIVSFLEGDPDQPIVTGRTYHATNRPPYELPANKTRTVLRTETHQGEGFNELRFEDQAGQEEIYIHGQKDLNVLIENDAAWHIKHDQHTDIDNERVTRVRKVPGEEGAPPSLGNDHLTVEGEKRDHIKADYSLTVDTSMHQKLGQSWLTQAGQEVHVKAGAKVVLEAGSEITVKVGGCFIKVDGGGVTLVGPTIKMNSGGNAGSGSGWAGKVPKSMEGMLDSPHTRWMKFYHLDSELMPLAGTPYKAVLSDGSVREGTLDGEGMALLEDVPAGTASVTYDLQDTFADLPRESISALTGHLDSLSDEG</sequence>
<protein>
    <recommendedName>
        <fullName evidence="2">Type VI secretion system spike protein VgrG1</fullName>
    </recommendedName>
    <alternativeName>
        <fullName evidence="2">Actin ADP-ribosyltransferase</fullName>
        <ecNumber evidence="1">2.4.2.31</ecNumber>
    </alternativeName>
</protein>